<dbReference type="EC" id="3.1.3.11" evidence="1"/>
<dbReference type="EMBL" id="AE014613">
    <property type="protein sequence ID" value="AAO71916.1"/>
    <property type="molecule type" value="Genomic_DNA"/>
</dbReference>
<dbReference type="EMBL" id="AL513382">
    <property type="protein sequence ID" value="CAD06895.1"/>
    <property type="molecule type" value="Genomic_DNA"/>
</dbReference>
<dbReference type="RefSeq" id="NP_458852.1">
    <property type="nucleotide sequence ID" value="NC_003198.1"/>
</dbReference>
<dbReference type="RefSeq" id="WP_000853761.1">
    <property type="nucleotide sequence ID" value="NZ_WSUR01000016.1"/>
</dbReference>
<dbReference type="SMR" id="Q8Z146"/>
<dbReference type="STRING" id="220341.gene:17588595"/>
<dbReference type="KEGG" id="stt:t4469"/>
<dbReference type="KEGG" id="sty:STY4774"/>
<dbReference type="PATRIC" id="fig|220341.7.peg.4878"/>
<dbReference type="eggNOG" id="COG0158">
    <property type="taxonomic scope" value="Bacteria"/>
</dbReference>
<dbReference type="HOGENOM" id="CLU_039977_2_2_6"/>
<dbReference type="OMA" id="YIPENCP"/>
<dbReference type="OrthoDB" id="9806756at2"/>
<dbReference type="UniPathway" id="UPA00138"/>
<dbReference type="Proteomes" id="UP000000541">
    <property type="component" value="Chromosome"/>
</dbReference>
<dbReference type="Proteomes" id="UP000002670">
    <property type="component" value="Chromosome"/>
</dbReference>
<dbReference type="GO" id="GO:0005829">
    <property type="term" value="C:cytosol"/>
    <property type="evidence" value="ECO:0007669"/>
    <property type="project" value="TreeGrafter"/>
</dbReference>
<dbReference type="GO" id="GO:0042132">
    <property type="term" value="F:fructose 1,6-bisphosphate 1-phosphatase activity"/>
    <property type="evidence" value="ECO:0007669"/>
    <property type="project" value="UniProtKB-UniRule"/>
</dbReference>
<dbReference type="GO" id="GO:0000287">
    <property type="term" value="F:magnesium ion binding"/>
    <property type="evidence" value="ECO:0007669"/>
    <property type="project" value="UniProtKB-UniRule"/>
</dbReference>
<dbReference type="GO" id="GO:0030388">
    <property type="term" value="P:fructose 1,6-bisphosphate metabolic process"/>
    <property type="evidence" value="ECO:0007669"/>
    <property type="project" value="TreeGrafter"/>
</dbReference>
<dbReference type="GO" id="GO:0006002">
    <property type="term" value="P:fructose 6-phosphate metabolic process"/>
    <property type="evidence" value="ECO:0007669"/>
    <property type="project" value="TreeGrafter"/>
</dbReference>
<dbReference type="GO" id="GO:0006000">
    <property type="term" value="P:fructose metabolic process"/>
    <property type="evidence" value="ECO:0007669"/>
    <property type="project" value="TreeGrafter"/>
</dbReference>
<dbReference type="GO" id="GO:0006094">
    <property type="term" value="P:gluconeogenesis"/>
    <property type="evidence" value="ECO:0007669"/>
    <property type="project" value="UniProtKB-UniRule"/>
</dbReference>
<dbReference type="GO" id="GO:0005986">
    <property type="term" value="P:sucrose biosynthetic process"/>
    <property type="evidence" value="ECO:0007669"/>
    <property type="project" value="TreeGrafter"/>
</dbReference>
<dbReference type="CDD" id="cd00354">
    <property type="entry name" value="FBPase"/>
    <property type="match status" value="1"/>
</dbReference>
<dbReference type="FunFam" id="3.30.540.10:FF:000002">
    <property type="entry name" value="Fructose-1,6-bisphosphatase class 1"/>
    <property type="match status" value="1"/>
</dbReference>
<dbReference type="FunFam" id="3.40.190.80:FF:000001">
    <property type="entry name" value="Fructose-1,6-bisphosphatase class 1"/>
    <property type="match status" value="1"/>
</dbReference>
<dbReference type="Gene3D" id="3.40.190.80">
    <property type="match status" value="1"/>
</dbReference>
<dbReference type="Gene3D" id="3.30.540.10">
    <property type="entry name" value="Fructose-1,6-Bisphosphatase, subunit A, domain 1"/>
    <property type="match status" value="1"/>
</dbReference>
<dbReference type="HAMAP" id="MF_01855">
    <property type="entry name" value="FBPase_class1"/>
    <property type="match status" value="1"/>
</dbReference>
<dbReference type="InterPro" id="IPR044015">
    <property type="entry name" value="FBPase_C_dom"/>
</dbReference>
<dbReference type="InterPro" id="IPR000146">
    <property type="entry name" value="FBPase_class-1"/>
</dbReference>
<dbReference type="InterPro" id="IPR033391">
    <property type="entry name" value="FBPase_N"/>
</dbReference>
<dbReference type="InterPro" id="IPR028343">
    <property type="entry name" value="FBPtase"/>
</dbReference>
<dbReference type="InterPro" id="IPR020548">
    <property type="entry name" value="Fructose_bisphosphatase_AS"/>
</dbReference>
<dbReference type="NCBIfam" id="NF006778">
    <property type="entry name" value="PRK09293.1-1"/>
    <property type="match status" value="1"/>
</dbReference>
<dbReference type="NCBIfam" id="NF006779">
    <property type="entry name" value="PRK09293.1-3"/>
    <property type="match status" value="1"/>
</dbReference>
<dbReference type="PANTHER" id="PTHR11556">
    <property type="entry name" value="FRUCTOSE-1,6-BISPHOSPHATASE-RELATED"/>
    <property type="match status" value="1"/>
</dbReference>
<dbReference type="PANTHER" id="PTHR11556:SF35">
    <property type="entry name" value="SEDOHEPTULOSE-1,7-BISPHOSPHATASE, CHLOROPLASTIC"/>
    <property type="match status" value="1"/>
</dbReference>
<dbReference type="Pfam" id="PF00316">
    <property type="entry name" value="FBPase"/>
    <property type="match status" value="1"/>
</dbReference>
<dbReference type="Pfam" id="PF18913">
    <property type="entry name" value="FBPase_C"/>
    <property type="match status" value="1"/>
</dbReference>
<dbReference type="PIRSF" id="PIRSF500210">
    <property type="entry name" value="FBPtase"/>
    <property type="match status" value="1"/>
</dbReference>
<dbReference type="PIRSF" id="PIRSF000904">
    <property type="entry name" value="FBPtase_SBPase"/>
    <property type="match status" value="1"/>
</dbReference>
<dbReference type="PRINTS" id="PR00115">
    <property type="entry name" value="F16BPHPHTASE"/>
</dbReference>
<dbReference type="SUPFAM" id="SSF56655">
    <property type="entry name" value="Carbohydrate phosphatase"/>
    <property type="match status" value="1"/>
</dbReference>
<dbReference type="PROSITE" id="PS00124">
    <property type="entry name" value="FBPASE"/>
    <property type="match status" value="1"/>
</dbReference>
<protein>
    <recommendedName>
        <fullName evidence="1">Fructose-1,6-bisphosphatase class 1</fullName>
        <shortName evidence="1">FBPase class 1</shortName>
        <ecNumber evidence="1">3.1.3.11</ecNumber>
    </recommendedName>
    <alternativeName>
        <fullName evidence="1">D-fructose-1,6-bisphosphate 1-phosphohydrolase class 1</fullName>
    </alternativeName>
</protein>
<reference key="1">
    <citation type="journal article" date="2001" name="Nature">
        <title>Complete genome sequence of a multiple drug resistant Salmonella enterica serovar Typhi CT18.</title>
        <authorList>
            <person name="Parkhill J."/>
            <person name="Dougan G."/>
            <person name="James K.D."/>
            <person name="Thomson N.R."/>
            <person name="Pickard D."/>
            <person name="Wain J."/>
            <person name="Churcher C.M."/>
            <person name="Mungall K.L."/>
            <person name="Bentley S.D."/>
            <person name="Holden M.T.G."/>
            <person name="Sebaihia M."/>
            <person name="Baker S."/>
            <person name="Basham D."/>
            <person name="Brooks K."/>
            <person name="Chillingworth T."/>
            <person name="Connerton P."/>
            <person name="Cronin A."/>
            <person name="Davis P."/>
            <person name="Davies R.M."/>
            <person name="Dowd L."/>
            <person name="White N."/>
            <person name="Farrar J."/>
            <person name="Feltwell T."/>
            <person name="Hamlin N."/>
            <person name="Haque A."/>
            <person name="Hien T.T."/>
            <person name="Holroyd S."/>
            <person name="Jagels K."/>
            <person name="Krogh A."/>
            <person name="Larsen T.S."/>
            <person name="Leather S."/>
            <person name="Moule S."/>
            <person name="O'Gaora P."/>
            <person name="Parry C."/>
            <person name="Quail M.A."/>
            <person name="Rutherford K.M."/>
            <person name="Simmonds M."/>
            <person name="Skelton J."/>
            <person name="Stevens K."/>
            <person name="Whitehead S."/>
            <person name="Barrell B.G."/>
        </authorList>
    </citation>
    <scope>NUCLEOTIDE SEQUENCE [LARGE SCALE GENOMIC DNA]</scope>
    <source>
        <strain>CT18</strain>
    </source>
</reference>
<reference key="2">
    <citation type="journal article" date="2003" name="J. Bacteriol.">
        <title>Comparative genomics of Salmonella enterica serovar Typhi strains Ty2 and CT18.</title>
        <authorList>
            <person name="Deng W."/>
            <person name="Liou S.-R."/>
            <person name="Plunkett G. III"/>
            <person name="Mayhew G.F."/>
            <person name="Rose D.J."/>
            <person name="Burland V."/>
            <person name="Kodoyianni V."/>
            <person name="Schwartz D.C."/>
            <person name="Blattner F.R."/>
        </authorList>
    </citation>
    <scope>NUCLEOTIDE SEQUENCE [LARGE SCALE GENOMIC DNA]</scope>
    <source>
        <strain>ATCC 700931 / Ty2</strain>
    </source>
</reference>
<accession>Q8Z146</accession>
<accession>Q7C525</accession>
<name>F16PA_SALTI</name>
<sequence length="332" mass="36859">MKTLGEFIVEKQHEFSQATGELTALLSAIKLGAKIIHRDINKAGLVDILGASCAENVQGEVQQKLDLFANEKLKAALKARDIVAGIASEEEDEIVVFEGCEHAKYVVLMDPLDGSSNIDVNVSVGTIFSIYRRVTPVGTPVTEEDFLQPGNKQVAAGYVVYGSSTMLIYTTGCGVHAFTYDPSLGVFCLCQERMRFPEKGKTYSINEGNYIKFPNGVKKYIKFCQEEDSSTSRPYTSRYIGSLVADFHRNLLKGGIYLYPSTASHPQGKLRLLYECNPMAFLAEQAGGKASDGKERILDIIPESLHQRRSFFVGNRHMVDDVERFIREYPDA</sequence>
<evidence type="ECO:0000255" key="1">
    <source>
        <dbReference type="HAMAP-Rule" id="MF_01855"/>
    </source>
</evidence>
<gene>
    <name evidence="1" type="primary">fbp</name>
    <name type="ordered locus">STY4774</name>
    <name type="ordered locus">t4469</name>
</gene>
<organism>
    <name type="scientific">Salmonella typhi</name>
    <dbReference type="NCBI Taxonomy" id="90370"/>
    <lineage>
        <taxon>Bacteria</taxon>
        <taxon>Pseudomonadati</taxon>
        <taxon>Pseudomonadota</taxon>
        <taxon>Gammaproteobacteria</taxon>
        <taxon>Enterobacterales</taxon>
        <taxon>Enterobacteriaceae</taxon>
        <taxon>Salmonella</taxon>
    </lineage>
</organism>
<feature type="chain" id="PRO_0000364696" description="Fructose-1,6-bisphosphatase class 1">
    <location>
        <begin position="1"/>
        <end position="332"/>
    </location>
</feature>
<feature type="binding site" evidence="1">
    <location>
        <position position="89"/>
    </location>
    <ligand>
        <name>Mg(2+)</name>
        <dbReference type="ChEBI" id="CHEBI:18420"/>
        <label>1</label>
    </ligand>
</feature>
<feature type="binding site" evidence="1">
    <location>
        <position position="110"/>
    </location>
    <ligand>
        <name>Mg(2+)</name>
        <dbReference type="ChEBI" id="CHEBI:18420"/>
        <label>1</label>
    </ligand>
</feature>
<feature type="binding site" evidence="1">
    <location>
        <position position="110"/>
    </location>
    <ligand>
        <name>Mg(2+)</name>
        <dbReference type="ChEBI" id="CHEBI:18420"/>
        <label>2</label>
    </ligand>
</feature>
<feature type="binding site" evidence="1">
    <location>
        <position position="112"/>
    </location>
    <ligand>
        <name>Mg(2+)</name>
        <dbReference type="ChEBI" id="CHEBI:18420"/>
        <label>1</label>
    </ligand>
</feature>
<feature type="binding site" evidence="1">
    <location>
        <begin position="113"/>
        <end position="116"/>
    </location>
    <ligand>
        <name>substrate</name>
    </ligand>
</feature>
<feature type="binding site" evidence="1">
    <location>
        <position position="113"/>
    </location>
    <ligand>
        <name>Mg(2+)</name>
        <dbReference type="ChEBI" id="CHEBI:18420"/>
        <label>2</label>
    </ligand>
</feature>
<feature type="binding site" evidence="1">
    <location>
        <position position="206"/>
    </location>
    <ligand>
        <name>substrate</name>
    </ligand>
</feature>
<feature type="binding site" evidence="1">
    <location>
        <position position="239"/>
    </location>
    <ligand>
        <name>substrate</name>
    </ligand>
</feature>
<feature type="binding site" evidence="1">
    <location>
        <begin position="257"/>
        <end position="259"/>
    </location>
    <ligand>
        <name>substrate</name>
    </ligand>
</feature>
<feature type="binding site" evidence="1">
    <location>
        <position position="269"/>
    </location>
    <ligand>
        <name>substrate</name>
    </ligand>
</feature>
<feature type="binding site" evidence="1">
    <location>
        <position position="275"/>
    </location>
    <ligand>
        <name>Mg(2+)</name>
        <dbReference type="ChEBI" id="CHEBI:18420"/>
        <label>2</label>
    </ligand>
</feature>
<keyword id="KW-0119">Carbohydrate metabolism</keyword>
<keyword id="KW-0963">Cytoplasm</keyword>
<keyword id="KW-0378">Hydrolase</keyword>
<keyword id="KW-0460">Magnesium</keyword>
<keyword id="KW-0479">Metal-binding</keyword>
<proteinExistence type="inferred from homology"/>
<comment type="catalytic activity">
    <reaction evidence="1">
        <text>beta-D-fructose 1,6-bisphosphate + H2O = beta-D-fructose 6-phosphate + phosphate</text>
        <dbReference type="Rhea" id="RHEA:11064"/>
        <dbReference type="ChEBI" id="CHEBI:15377"/>
        <dbReference type="ChEBI" id="CHEBI:32966"/>
        <dbReference type="ChEBI" id="CHEBI:43474"/>
        <dbReference type="ChEBI" id="CHEBI:57634"/>
        <dbReference type="EC" id="3.1.3.11"/>
    </reaction>
</comment>
<comment type="cofactor">
    <cofactor evidence="1">
        <name>Mg(2+)</name>
        <dbReference type="ChEBI" id="CHEBI:18420"/>
    </cofactor>
    <text evidence="1">Binds 2 magnesium ions per subunit.</text>
</comment>
<comment type="pathway">
    <text evidence="1">Carbohydrate biosynthesis; gluconeogenesis.</text>
</comment>
<comment type="subunit">
    <text evidence="1">Homotetramer.</text>
</comment>
<comment type="subcellular location">
    <subcellularLocation>
        <location evidence="1">Cytoplasm</location>
    </subcellularLocation>
</comment>
<comment type="similarity">
    <text evidence="1">Belongs to the FBPase class 1 family.</text>
</comment>